<keyword id="KW-0378">Hydrolase</keyword>
<keyword id="KW-0460">Magnesium</keyword>
<keyword id="KW-0479">Metal-binding</keyword>
<evidence type="ECO:0000255" key="1">
    <source>
        <dbReference type="HAMAP-Rule" id="MF_01568"/>
    </source>
</evidence>
<accession>Q8E6W2</accession>
<dbReference type="EC" id="3.6.1.15" evidence="1"/>
<dbReference type="EC" id="3.6.1.6" evidence="1"/>
<dbReference type="EMBL" id="AL766845">
    <property type="protein sequence ID" value="CAD46090.1"/>
    <property type="molecule type" value="Genomic_DNA"/>
</dbReference>
<dbReference type="RefSeq" id="WP_001239184.1">
    <property type="nucleotide sequence ID" value="NC_004368.1"/>
</dbReference>
<dbReference type="SMR" id="Q8E6W2"/>
<dbReference type="KEGG" id="san:gbs0446"/>
<dbReference type="eggNOG" id="COG3557">
    <property type="taxonomic scope" value="Bacteria"/>
</dbReference>
<dbReference type="HOGENOM" id="CLU_109787_1_0_9"/>
<dbReference type="Proteomes" id="UP000000823">
    <property type="component" value="Chromosome"/>
</dbReference>
<dbReference type="GO" id="GO:0000287">
    <property type="term" value="F:magnesium ion binding"/>
    <property type="evidence" value="ECO:0007669"/>
    <property type="project" value="UniProtKB-UniRule"/>
</dbReference>
<dbReference type="GO" id="GO:0017110">
    <property type="term" value="F:nucleoside diphosphate phosphatase activity"/>
    <property type="evidence" value="ECO:0007669"/>
    <property type="project" value="UniProtKB-UniRule"/>
</dbReference>
<dbReference type="GO" id="GO:0017111">
    <property type="term" value="F:ribonucleoside triphosphate phosphatase activity"/>
    <property type="evidence" value="ECO:0007669"/>
    <property type="project" value="UniProtKB-UniRule"/>
</dbReference>
<dbReference type="Gene3D" id="2.40.380.10">
    <property type="entry name" value="FomD-like"/>
    <property type="match status" value="1"/>
</dbReference>
<dbReference type="HAMAP" id="MF_01568">
    <property type="entry name" value="Ntdp"/>
    <property type="match status" value="1"/>
</dbReference>
<dbReference type="InterPro" id="IPR007295">
    <property type="entry name" value="DUF402"/>
</dbReference>
<dbReference type="InterPro" id="IPR035930">
    <property type="entry name" value="FomD-like_sf"/>
</dbReference>
<dbReference type="InterPro" id="IPR050212">
    <property type="entry name" value="Ntdp-like"/>
</dbReference>
<dbReference type="InterPro" id="IPR016882">
    <property type="entry name" value="SA1684"/>
</dbReference>
<dbReference type="NCBIfam" id="NF010183">
    <property type="entry name" value="PRK13662.1"/>
    <property type="match status" value="1"/>
</dbReference>
<dbReference type="PANTHER" id="PTHR39159">
    <property type="match status" value="1"/>
</dbReference>
<dbReference type="PANTHER" id="PTHR39159:SF1">
    <property type="entry name" value="UPF0374 PROTEIN YGAC"/>
    <property type="match status" value="1"/>
</dbReference>
<dbReference type="Pfam" id="PF04167">
    <property type="entry name" value="DUF402"/>
    <property type="match status" value="1"/>
</dbReference>
<dbReference type="PIRSF" id="PIRSF028345">
    <property type="entry name" value="UCP028345"/>
    <property type="match status" value="1"/>
</dbReference>
<dbReference type="SUPFAM" id="SSF159234">
    <property type="entry name" value="FomD-like"/>
    <property type="match status" value="1"/>
</dbReference>
<sequence>MRLPKEGDFITIQSYKHDGSLHRTWRDTMVLKTTENALIGVNDHTLVTENDGRRWVTREPAIVYFHKKYWFNIIAMIRETGVSYYCNLASPYILDPEALKYIDYDLDVKVFADGEKRLLDVDEYEQHKAQMNYPTDIDYILKENVKILVEWINENKGPFSSSYINIWYKRYLELKKR</sequence>
<proteinExistence type="inferred from homology"/>
<protein>
    <recommendedName>
        <fullName evidence="1">Nucleoside triphosphate/diphosphate phosphatase</fullName>
        <ecNumber evidence="1">3.6.1.15</ecNumber>
        <ecNumber evidence="1">3.6.1.6</ecNumber>
    </recommendedName>
</protein>
<comment type="function">
    <text evidence="1">Has nucleoside phosphatase activity towards nucleoside triphosphates and nucleoside diphosphates.</text>
</comment>
<comment type="catalytic activity">
    <reaction evidence="1">
        <text>a ribonucleoside 5'-triphosphate + H2O = a ribonucleoside 5'-diphosphate + phosphate + H(+)</text>
        <dbReference type="Rhea" id="RHEA:23680"/>
        <dbReference type="ChEBI" id="CHEBI:15377"/>
        <dbReference type="ChEBI" id="CHEBI:15378"/>
        <dbReference type="ChEBI" id="CHEBI:43474"/>
        <dbReference type="ChEBI" id="CHEBI:57930"/>
        <dbReference type="ChEBI" id="CHEBI:61557"/>
        <dbReference type="EC" id="3.6.1.15"/>
    </reaction>
</comment>
<comment type="catalytic activity">
    <reaction evidence="1">
        <text>a ribonucleoside 5'-diphosphate + H2O = a ribonucleoside 5'-phosphate + phosphate + H(+)</text>
        <dbReference type="Rhea" id="RHEA:36799"/>
        <dbReference type="ChEBI" id="CHEBI:15377"/>
        <dbReference type="ChEBI" id="CHEBI:15378"/>
        <dbReference type="ChEBI" id="CHEBI:43474"/>
        <dbReference type="ChEBI" id="CHEBI:57930"/>
        <dbReference type="ChEBI" id="CHEBI:58043"/>
        <dbReference type="EC" id="3.6.1.6"/>
    </reaction>
</comment>
<comment type="cofactor">
    <cofactor evidence="1">
        <name>Mg(2+)</name>
        <dbReference type="ChEBI" id="CHEBI:18420"/>
    </cofactor>
</comment>
<comment type="similarity">
    <text evidence="1">Belongs to the Ntdp family.</text>
</comment>
<reference key="1">
    <citation type="journal article" date="2002" name="Mol. Microbiol.">
        <title>Genome sequence of Streptococcus agalactiae, a pathogen causing invasive neonatal disease.</title>
        <authorList>
            <person name="Glaser P."/>
            <person name="Rusniok C."/>
            <person name="Buchrieser C."/>
            <person name="Chevalier F."/>
            <person name="Frangeul L."/>
            <person name="Msadek T."/>
            <person name="Zouine M."/>
            <person name="Couve E."/>
            <person name="Lalioui L."/>
            <person name="Poyart C."/>
            <person name="Trieu-Cuot P."/>
            <person name="Kunst F."/>
        </authorList>
    </citation>
    <scope>NUCLEOTIDE SEQUENCE [LARGE SCALE GENOMIC DNA]</scope>
    <source>
        <strain>NEM316</strain>
    </source>
</reference>
<feature type="chain" id="PRO_0000248118" description="Nucleoside triphosphate/diphosphate phosphatase">
    <location>
        <begin position="1"/>
        <end position="177"/>
    </location>
</feature>
<feature type="active site" description="Proton donor" evidence="1">
    <location>
        <position position="23"/>
    </location>
</feature>
<feature type="binding site" evidence="1">
    <location>
        <position position="87"/>
    </location>
    <ligand>
        <name>Mg(2+)</name>
        <dbReference type="ChEBI" id="CHEBI:18420"/>
        <label>1</label>
    </ligand>
</feature>
<feature type="binding site" evidence="1">
    <location>
        <position position="103"/>
    </location>
    <ligand>
        <name>Mg(2+)</name>
        <dbReference type="ChEBI" id="CHEBI:18420"/>
        <label>1</label>
    </ligand>
</feature>
<feature type="binding site" evidence="1">
    <location>
        <position position="105"/>
    </location>
    <ligand>
        <name>Mg(2+)</name>
        <dbReference type="ChEBI" id="CHEBI:18420"/>
        <label>2</label>
    </ligand>
</feature>
<feature type="binding site" evidence="1">
    <location>
        <position position="107"/>
    </location>
    <ligand>
        <name>Mg(2+)</name>
        <dbReference type="ChEBI" id="CHEBI:18420"/>
        <label>1</label>
    </ligand>
</feature>
<feature type="binding site" evidence="1">
    <location>
        <position position="107"/>
    </location>
    <ligand>
        <name>Mg(2+)</name>
        <dbReference type="ChEBI" id="CHEBI:18420"/>
        <label>2</label>
    </ligand>
</feature>
<feature type="binding site" evidence="1">
    <location>
        <position position="120"/>
    </location>
    <ligand>
        <name>Mg(2+)</name>
        <dbReference type="ChEBI" id="CHEBI:18420"/>
        <label>2</label>
    </ligand>
</feature>
<feature type="binding site" evidence="1">
    <location>
        <position position="123"/>
    </location>
    <ligand>
        <name>Mg(2+)</name>
        <dbReference type="ChEBI" id="CHEBI:18420"/>
        <label>2</label>
    </ligand>
</feature>
<organism>
    <name type="scientific">Streptococcus agalactiae serotype III (strain NEM316)</name>
    <dbReference type="NCBI Taxonomy" id="211110"/>
    <lineage>
        <taxon>Bacteria</taxon>
        <taxon>Bacillati</taxon>
        <taxon>Bacillota</taxon>
        <taxon>Bacilli</taxon>
        <taxon>Lactobacillales</taxon>
        <taxon>Streptococcaceae</taxon>
        <taxon>Streptococcus</taxon>
    </lineage>
</organism>
<name>NTDP_STRA3</name>
<gene>
    <name type="ordered locus">gbs0446</name>
</gene>